<sequence length="265" mass="28650">MATSAIQQSSFAGQTALKPSNELLRKVGVSGGGRVTMRRTVKSTPQSIWYGPDRPKYLGPFSENTPSYLTGEYPGDYGWDTAGLSADPETFAKNRELEVIHSRWAMLGALGCTFPEILSKNGVKFGEAVWFKAGSQIFSEGGLDYLGNPNLIHAQSILAIWAVQVVLMGFIEGYRIGGGPLGEGLDPLYPGGAFDPLNLAEDPEAFSELKVKELKNGRLAMFSMFGFFVQAIVTGKGPIENLFDHLADPVANNAWSYATNFVPGN</sequence>
<accession>Q9SHR7</accession>
<accession>Q9SYW9</accession>
<accession>Q9XF86</accession>
<reference key="1">
    <citation type="journal article" date="1999" name="Trends Plant Sci.">
        <title>A guide to the Lhc genes and their relatives in Arabidopsis.</title>
        <authorList>
            <person name="Jansson S."/>
        </authorList>
    </citation>
    <scope>NUCLEOTIDE SEQUENCE [MRNA]</scope>
    <scope>GENE FAMILY</scope>
    <scope>NOMENCLATURE</scope>
</reference>
<reference key="2">
    <citation type="journal article" date="1999" name="Nature">
        <title>Sequence and analysis of chromosome 2 of the plant Arabidopsis thaliana.</title>
        <authorList>
            <person name="Lin X."/>
            <person name="Kaul S."/>
            <person name="Rounsley S.D."/>
            <person name="Shea T.P."/>
            <person name="Benito M.-I."/>
            <person name="Town C.D."/>
            <person name="Fujii C.Y."/>
            <person name="Mason T.M."/>
            <person name="Bowman C.L."/>
            <person name="Barnstead M.E."/>
            <person name="Feldblyum T.V."/>
            <person name="Buell C.R."/>
            <person name="Ketchum K.A."/>
            <person name="Lee J.J."/>
            <person name="Ronning C.M."/>
            <person name="Koo H.L."/>
            <person name="Moffat K.S."/>
            <person name="Cronin L.A."/>
            <person name="Shen M."/>
            <person name="Pai G."/>
            <person name="Van Aken S."/>
            <person name="Umayam L."/>
            <person name="Tallon L.J."/>
            <person name="Gill J.E."/>
            <person name="Adams M.D."/>
            <person name="Carrera A.J."/>
            <person name="Creasy T.H."/>
            <person name="Goodman H.M."/>
            <person name="Somerville C.R."/>
            <person name="Copenhaver G.P."/>
            <person name="Preuss D."/>
            <person name="Nierman W.C."/>
            <person name="White O."/>
            <person name="Eisen J.A."/>
            <person name="Salzberg S.L."/>
            <person name="Fraser C.M."/>
            <person name="Venter J.C."/>
        </authorList>
    </citation>
    <scope>NUCLEOTIDE SEQUENCE [LARGE SCALE GENOMIC DNA]</scope>
    <source>
        <strain>cv. Columbia</strain>
    </source>
</reference>
<reference key="3">
    <citation type="journal article" date="2017" name="Plant J.">
        <title>Araport11: a complete reannotation of the Arabidopsis thaliana reference genome.</title>
        <authorList>
            <person name="Cheng C.Y."/>
            <person name="Krishnakumar V."/>
            <person name="Chan A.P."/>
            <person name="Thibaud-Nissen F."/>
            <person name="Schobel S."/>
            <person name="Town C.D."/>
        </authorList>
    </citation>
    <scope>GENOME REANNOTATION</scope>
    <source>
        <strain>cv. Columbia</strain>
    </source>
</reference>
<reference key="4">
    <citation type="journal article" date="2003" name="Science">
        <title>Empirical analysis of transcriptional activity in the Arabidopsis genome.</title>
        <authorList>
            <person name="Yamada K."/>
            <person name="Lim J."/>
            <person name="Dale J.M."/>
            <person name="Chen H."/>
            <person name="Shinn P."/>
            <person name="Palm C.J."/>
            <person name="Southwick A.M."/>
            <person name="Wu H.C."/>
            <person name="Kim C.J."/>
            <person name="Nguyen M."/>
            <person name="Pham P.K."/>
            <person name="Cheuk R.F."/>
            <person name="Karlin-Newmann G."/>
            <person name="Liu S.X."/>
            <person name="Lam B."/>
            <person name="Sakano H."/>
            <person name="Wu T."/>
            <person name="Yu G."/>
            <person name="Miranda M."/>
            <person name="Quach H.L."/>
            <person name="Tripp M."/>
            <person name="Chang C.H."/>
            <person name="Lee J.M."/>
            <person name="Toriumi M.J."/>
            <person name="Chan M.M."/>
            <person name="Tang C.C."/>
            <person name="Onodera C.S."/>
            <person name="Deng J.M."/>
            <person name="Akiyama K."/>
            <person name="Ansari Y."/>
            <person name="Arakawa T."/>
            <person name="Banh J."/>
            <person name="Banno F."/>
            <person name="Bowser L."/>
            <person name="Brooks S.Y."/>
            <person name="Carninci P."/>
            <person name="Chao Q."/>
            <person name="Choy N."/>
            <person name="Enju A."/>
            <person name="Goldsmith A.D."/>
            <person name="Gurjal M."/>
            <person name="Hansen N.F."/>
            <person name="Hayashizaki Y."/>
            <person name="Johnson-Hopson C."/>
            <person name="Hsuan V.W."/>
            <person name="Iida K."/>
            <person name="Karnes M."/>
            <person name="Khan S."/>
            <person name="Koesema E."/>
            <person name="Ishida J."/>
            <person name="Jiang P.X."/>
            <person name="Jones T."/>
            <person name="Kawai J."/>
            <person name="Kamiya A."/>
            <person name="Meyers C."/>
            <person name="Nakajima M."/>
            <person name="Narusaka M."/>
            <person name="Seki M."/>
            <person name="Sakurai T."/>
            <person name="Satou M."/>
            <person name="Tamse R."/>
            <person name="Vaysberg M."/>
            <person name="Wallender E.K."/>
            <person name="Wong C."/>
            <person name="Yamamura Y."/>
            <person name="Yuan S."/>
            <person name="Shinozaki K."/>
            <person name="Davis R.W."/>
            <person name="Theologis A."/>
            <person name="Ecker J.R."/>
        </authorList>
    </citation>
    <scope>NUCLEOTIDE SEQUENCE [LARGE SCALE MRNA]</scope>
    <source>
        <strain>cv. Columbia</strain>
    </source>
</reference>
<reference key="5">
    <citation type="journal article" date="2010" name="Proc. Natl. Acad. Sci. U.S.A.">
        <title>The PPH1 phosphatase is specifically involved in LHCII dephosphorylation and state transitions in Arabidopsis.</title>
        <authorList>
            <person name="Shapiguzov A."/>
            <person name="Ingelsson B."/>
            <person name="Samol I."/>
            <person name="Andres C."/>
            <person name="Kessler F."/>
            <person name="Rochaix J.D."/>
            <person name="Vener A.V."/>
            <person name="Goldschmidt-Clermont M."/>
        </authorList>
    </citation>
    <scope>DEPHOSPHORYLATION BY PPH1</scope>
</reference>
<reference key="6">
    <citation type="journal article" date="2012" name="BMC Plant Biol.">
        <title>Arabidopsis plants grown in the field and climate chambers significantly differ in leaf morphology and photosystem components.</title>
        <authorList>
            <person name="Mishra Y."/>
            <person name="Jaenkaenpaeae H.J."/>
            <person name="Kiss A.Z."/>
            <person name="Funk C."/>
            <person name="Schroeder W.P."/>
            <person name="Jansson S."/>
        </authorList>
    </citation>
    <scope>INDUCTION BY LOW LIGHT</scope>
    <source>
        <strain>cv. Columbia</strain>
    </source>
</reference>
<reference key="7">
    <citation type="journal article" date="2013" name="J. Photochem. Photobiol. B">
        <title>Change in fast Chl a fluorescence transients, 2 dimensional protein profile and pigment protein interactions during state transitions in Arabidopsis thaliana.</title>
        <authorList>
            <person name="Nellaepalli S."/>
            <person name="Kodru S."/>
            <person name="Malavath T."/>
            <person name="Subramanyam R."/>
        </authorList>
    </citation>
    <scope>FUNCTION</scope>
    <scope>PHOSPHORYLATION</scope>
    <scope>SUBCELLULAR LOCATION</scope>
    <scope>SUBUNIT</scope>
    <source>
        <strain>cv. Columbia</strain>
    </source>
</reference>
<reference key="8">
    <citation type="journal article" date="2013" name="J. Plant Physiol.">
        <title>AtFtsH heterocomplex-mediated degradation of apoproteins of the major light harvesting complex of photosystem II (LHCII) in response to stresses.</title>
        <authorList>
            <person name="Lucinski R."/>
            <person name="Jackowski G."/>
        </authorList>
    </citation>
    <scope>REPRESSION BY DESICCATION; COLD AND HIGH IRRADIANCE</scope>
    <source>
        <strain>cv. Columbia</strain>
    </source>
</reference>
<reference key="9">
    <citation type="journal article" date="2013" name="Plant J.">
        <title>Very rapid phosphorylation kinetics suggest a unique role for Lhcb2 during state transitions in Arabidopsis.</title>
        <authorList>
            <person name="Leoni C."/>
            <person name="Pietrzykowska M."/>
            <person name="Kiss A.Z."/>
            <person name="Suorsa M."/>
            <person name="Ceci L.R."/>
            <person name="Aro E.M."/>
            <person name="Jansson S."/>
        </authorList>
    </citation>
    <scope>FUNCTION</scope>
    <scope>PHOSPHORYLATION AT THR-40 BY STN7</scope>
    <scope>SUBUNIT</scope>
    <source>
        <strain>cv. Columbia</strain>
    </source>
</reference>
<reference key="10">
    <citation type="journal article" date="2014" name="Plant Cell">
        <title>The light-harvesting chlorophyll a/b binding proteins Lhcb1 and Lhcb2 play complementary roles during state transitions in Arabidopsis.</title>
        <authorList>
            <person name="Pietrzykowska M."/>
            <person name="Suorsa M."/>
            <person name="Semchonok D.A."/>
            <person name="Tikkanen M."/>
            <person name="Boekema E.J."/>
            <person name="Aro E.-M."/>
            <person name="Jansson S."/>
        </authorList>
    </citation>
    <scope>FUNCTION</scope>
    <scope>DISRUPTION PHENOTYPE</scope>
    <scope>SUBUNIT</scope>
    <source>
        <strain>cv. Columbia</strain>
    </source>
</reference>
<reference key="11">
    <citation type="journal article" date="2015" name="Biochim. Biophys. Acta">
        <title>The specific localizations of phosphorylated Lhcb1 and Lhcb2 isoforms reveal the role of Lhcb2 in the formation of the PSI-LHCII supercomplex in Arabidopsis during state transitions.</title>
        <authorList>
            <person name="Crepin A."/>
            <person name="Caffarri S."/>
        </authorList>
    </citation>
    <scope>FUNCTION</scope>
    <scope>SUBUNIT</scope>
    <scope>PHOSPHORYLATION BY STN7</scope>
    <scope>DEPHOSPHORYLATION BY PPH1</scope>
    <source>
        <strain>cv. Columbia</strain>
    </source>
</reference>
<dbReference type="EMBL" id="AF134122">
    <property type="protein sequence ID" value="AAD28769.1"/>
    <property type="molecule type" value="mRNA"/>
</dbReference>
<dbReference type="EMBL" id="AF134124">
    <property type="protein sequence ID" value="AAD28771.1"/>
    <property type="molecule type" value="mRNA"/>
</dbReference>
<dbReference type="EMBL" id="AC007443">
    <property type="protein sequence ID" value="AAD31358.1"/>
    <property type="molecule type" value="Genomic_DNA"/>
</dbReference>
<dbReference type="EMBL" id="CP002685">
    <property type="protein sequence ID" value="AEC05894.1"/>
    <property type="molecule type" value="Genomic_DNA"/>
</dbReference>
<dbReference type="EMBL" id="AY052275">
    <property type="protein sequence ID" value="AAK96468.1"/>
    <property type="molecule type" value="mRNA"/>
</dbReference>
<dbReference type="EMBL" id="AY052348">
    <property type="protein sequence ID" value="AAK96540.1"/>
    <property type="molecule type" value="mRNA"/>
</dbReference>
<dbReference type="EMBL" id="BT001933">
    <property type="protein sequence ID" value="AAN71932.1"/>
    <property type="molecule type" value="mRNA"/>
</dbReference>
<dbReference type="PIR" id="T52323">
    <property type="entry name" value="T52323"/>
</dbReference>
<dbReference type="PIR" id="T52326">
    <property type="entry name" value="T52326"/>
</dbReference>
<dbReference type="RefSeq" id="NP_178585.1">
    <property type="nucleotide sequence ID" value="NM_126540.4"/>
</dbReference>
<dbReference type="PDB" id="8J6Z">
    <property type="method" value="EM"/>
    <property type="resolution" value="2.79 A"/>
    <property type="chains" value="z=1-265"/>
</dbReference>
<dbReference type="PDBsum" id="8J6Z"/>
<dbReference type="EMDB" id="EMD-36021"/>
<dbReference type="SMR" id="Q9SHR7"/>
<dbReference type="FunCoup" id="Q9SHR7">
    <property type="interactions" value="534"/>
</dbReference>
<dbReference type="STRING" id="3702.Q9SHR7"/>
<dbReference type="TCDB" id="3.E.2.2.3">
    <property type="family name" value="the photosynthetic reaction center (prc) family"/>
</dbReference>
<dbReference type="iPTMnet" id="Q9SHR7"/>
<dbReference type="PaxDb" id="3702-AT2G05100.1"/>
<dbReference type="ProteomicsDB" id="222785"/>
<dbReference type="EnsemblPlants" id="AT2G05100.1">
    <property type="protein sequence ID" value="AT2G05100.1"/>
    <property type="gene ID" value="AT2G05100"/>
</dbReference>
<dbReference type="GeneID" id="815058"/>
<dbReference type="Gramene" id="AT2G05100.1">
    <property type="protein sequence ID" value="AT2G05100.1"/>
    <property type="gene ID" value="AT2G05100"/>
</dbReference>
<dbReference type="KEGG" id="ath:AT2G05100"/>
<dbReference type="Araport" id="AT2G05100"/>
<dbReference type="TAIR" id="AT2G05100">
    <property type="gene designation" value="LHCB2.1"/>
</dbReference>
<dbReference type="eggNOG" id="ENOG502QPU1">
    <property type="taxonomic scope" value="Eukaryota"/>
</dbReference>
<dbReference type="HOGENOM" id="CLU_057943_2_0_1"/>
<dbReference type="InParanoid" id="Q9SHR7"/>
<dbReference type="OMA" id="ASIWYGP"/>
<dbReference type="PhylomeDB" id="Q9SHR7"/>
<dbReference type="PRO" id="PR:Q9SHR7"/>
<dbReference type="Proteomes" id="UP000006548">
    <property type="component" value="Chromosome 2"/>
</dbReference>
<dbReference type="ExpressionAtlas" id="Q9SHR7">
    <property type="expression patterns" value="baseline and differential"/>
</dbReference>
<dbReference type="GO" id="GO:0009507">
    <property type="term" value="C:chloroplast"/>
    <property type="evidence" value="ECO:0007005"/>
    <property type="project" value="TAIR"/>
</dbReference>
<dbReference type="GO" id="GO:0009941">
    <property type="term" value="C:chloroplast envelope"/>
    <property type="evidence" value="ECO:0007005"/>
    <property type="project" value="TAIR"/>
</dbReference>
<dbReference type="GO" id="GO:0009535">
    <property type="term" value="C:chloroplast thylakoid membrane"/>
    <property type="evidence" value="ECO:0000314"/>
    <property type="project" value="UniProtKB"/>
</dbReference>
<dbReference type="GO" id="GO:0005739">
    <property type="term" value="C:mitochondrion"/>
    <property type="evidence" value="ECO:0007005"/>
    <property type="project" value="TAIR"/>
</dbReference>
<dbReference type="GO" id="GO:0009522">
    <property type="term" value="C:photosystem I"/>
    <property type="evidence" value="ECO:0000314"/>
    <property type="project" value="UniProtKB"/>
</dbReference>
<dbReference type="GO" id="GO:0009523">
    <property type="term" value="C:photosystem II"/>
    <property type="evidence" value="ECO:0000314"/>
    <property type="project" value="UniProtKB"/>
</dbReference>
<dbReference type="GO" id="GO:0009517">
    <property type="term" value="C:PSII associated light-harvesting complex II"/>
    <property type="evidence" value="ECO:0000314"/>
    <property type="project" value="UniProtKB"/>
</dbReference>
<dbReference type="GO" id="GO:0009579">
    <property type="term" value="C:thylakoid"/>
    <property type="evidence" value="ECO:0007005"/>
    <property type="project" value="TAIR"/>
</dbReference>
<dbReference type="GO" id="GO:0016168">
    <property type="term" value="F:chlorophyll binding"/>
    <property type="evidence" value="ECO:0007669"/>
    <property type="project" value="UniProtKB-KW"/>
</dbReference>
<dbReference type="GO" id="GO:0046872">
    <property type="term" value="F:metal ion binding"/>
    <property type="evidence" value="ECO:0007669"/>
    <property type="project" value="UniProtKB-KW"/>
</dbReference>
<dbReference type="GO" id="GO:0019904">
    <property type="term" value="F:protein domain specific binding"/>
    <property type="evidence" value="ECO:0000353"/>
    <property type="project" value="CAFA"/>
</dbReference>
<dbReference type="GO" id="GO:0071215">
    <property type="term" value="P:cellular response to abscisic acid stimulus"/>
    <property type="evidence" value="ECO:0000250"/>
    <property type="project" value="UniProtKB"/>
</dbReference>
<dbReference type="GO" id="GO:0042631">
    <property type="term" value="P:cellular response to water deprivation"/>
    <property type="evidence" value="ECO:0000250"/>
    <property type="project" value="UniProtKB"/>
</dbReference>
<dbReference type="GO" id="GO:0009768">
    <property type="term" value="P:photosynthesis, light harvesting in photosystem I"/>
    <property type="evidence" value="ECO:0000314"/>
    <property type="project" value="UniProtKB"/>
</dbReference>
<dbReference type="GO" id="GO:0009769">
    <property type="term" value="P:photosynthesis, light harvesting in photosystem II"/>
    <property type="evidence" value="ECO:0000314"/>
    <property type="project" value="UniProtKB"/>
</dbReference>
<dbReference type="GO" id="GO:1903428">
    <property type="term" value="P:positive regulation of reactive oxygen species biosynthetic process"/>
    <property type="evidence" value="ECO:0000250"/>
    <property type="project" value="UniProtKB"/>
</dbReference>
<dbReference type="GO" id="GO:0090333">
    <property type="term" value="P:regulation of stomatal closure"/>
    <property type="evidence" value="ECO:0000250"/>
    <property type="project" value="UniProtKB"/>
</dbReference>
<dbReference type="GO" id="GO:0009409">
    <property type="term" value="P:response to cold"/>
    <property type="evidence" value="ECO:0000270"/>
    <property type="project" value="UniProtKB"/>
</dbReference>
<dbReference type="GO" id="GO:0009269">
    <property type="term" value="P:response to desiccation"/>
    <property type="evidence" value="ECO:0000270"/>
    <property type="project" value="UniProtKB"/>
</dbReference>
<dbReference type="GO" id="GO:0010218">
    <property type="term" value="P:response to far red light"/>
    <property type="evidence" value="ECO:0000314"/>
    <property type="project" value="UniProtKB"/>
</dbReference>
<dbReference type="GO" id="GO:0009644">
    <property type="term" value="P:response to high light intensity"/>
    <property type="evidence" value="ECO:0000270"/>
    <property type="project" value="UniProtKB"/>
</dbReference>
<dbReference type="GO" id="GO:0009416">
    <property type="term" value="P:response to light stimulus"/>
    <property type="evidence" value="ECO:0000314"/>
    <property type="project" value="UniProtKB"/>
</dbReference>
<dbReference type="GO" id="GO:0009645">
    <property type="term" value="P:response to low light intensity stimulus"/>
    <property type="evidence" value="ECO:0000270"/>
    <property type="project" value="UniProtKB"/>
</dbReference>
<dbReference type="GO" id="GO:0010114">
    <property type="term" value="P:response to red light"/>
    <property type="evidence" value="ECO:0000314"/>
    <property type="project" value="UniProtKB"/>
</dbReference>
<dbReference type="FunFam" id="1.10.3460.10:FF:000001">
    <property type="entry name" value="Chlorophyll a-b binding protein, chloroplastic"/>
    <property type="match status" value="1"/>
</dbReference>
<dbReference type="Gene3D" id="1.10.3460.10">
    <property type="entry name" value="Chlorophyll a/b binding protein domain"/>
    <property type="match status" value="1"/>
</dbReference>
<dbReference type="InterPro" id="IPR001344">
    <property type="entry name" value="Chloro_AB-bd_pln"/>
</dbReference>
<dbReference type="InterPro" id="IPR022796">
    <property type="entry name" value="Chloroa_b-bind"/>
</dbReference>
<dbReference type="PANTHER" id="PTHR21649">
    <property type="entry name" value="CHLOROPHYLL A/B BINDING PROTEIN"/>
    <property type="match status" value="1"/>
</dbReference>
<dbReference type="Pfam" id="PF00504">
    <property type="entry name" value="Chloroa_b-bind"/>
    <property type="match status" value="1"/>
</dbReference>
<dbReference type="SUPFAM" id="SSF103511">
    <property type="entry name" value="Chlorophyll a-b binding protein"/>
    <property type="match status" value="1"/>
</dbReference>
<protein>
    <recommendedName>
        <fullName evidence="13">Chlorophyll a-b binding protein 2.1, chloroplastic</fullName>
    </recommendedName>
    <alternativeName>
        <fullName evidence="13">Photosystem II light harvesting complex gene 2.1</fullName>
    </alternativeName>
    <alternativeName>
        <fullName evidence="13">Protein LIGHT-HARVESTING CHLOROPHYLL B-BINDING 2.1</fullName>
    </alternativeName>
</protein>
<organism>
    <name type="scientific">Arabidopsis thaliana</name>
    <name type="common">Mouse-ear cress</name>
    <dbReference type="NCBI Taxonomy" id="3702"/>
    <lineage>
        <taxon>Eukaryota</taxon>
        <taxon>Viridiplantae</taxon>
        <taxon>Streptophyta</taxon>
        <taxon>Embryophyta</taxon>
        <taxon>Tracheophyta</taxon>
        <taxon>Spermatophyta</taxon>
        <taxon>Magnoliopsida</taxon>
        <taxon>eudicotyledons</taxon>
        <taxon>Gunneridae</taxon>
        <taxon>Pentapetalae</taxon>
        <taxon>rosids</taxon>
        <taxon>malvids</taxon>
        <taxon>Brassicales</taxon>
        <taxon>Brassicaceae</taxon>
        <taxon>Camelineae</taxon>
        <taxon>Arabidopsis</taxon>
    </lineage>
</organism>
<comment type="function">
    <text evidence="3 4 9 10 11 12">The light-harvesting complex (LHC) functions as a light receptor, it captures and delivers excitation energy to photosystems with which it is closely associated (By similarity). Mediates rapid phosphorylation and migration of LHCII-PSII to photosystem I (PSI) after transition to state 2 (red) light conditions, thus leading to the formation of PSI-PSII-LHCII and PSI-LHCII supercomplex to balance the relative excitation of PSI and PSII (PubMed:23888908, PubMed:23995216, PubMed:25194026, PubMed:26392145). Involved in the production of reactive oxygen species (ROS) and stomatal closure upon abscisic acid (ABA) treatment. Required to prevent water loss (By similarity).</text>
</comment>
<comment type="cofactor">
    <text evidence="2">Binds at least 14 chlorophylls (8 Chl-a and 6 Chl-b) and carotenoids such as lutein and neoxanthin.</text>
</comment>
<comment type="subunit">
    <text evidence="2 9 10 11 12">The LHC complex consists of chlorophyll a-b binding proteins (By similarity). Component of LHCII trimers made of LHCB1, LHCB2 and LHCB3 subunits (PubMed:23888908, PubMed:23995216, PubMed:25194026). Associated with super- (PSI-LHCII and PSII-LHCII) and mega-complexes (PSI-PSII-LHCII) containing LHCII and both photosystem (PS)I and PSII, in state 2 (red) light conditions (PubMed:23888908, PubMed:23995216, PubMed:25194026, PubMed:26392145).</text>
</comment>
<comment type="subcellular location">
    <subcellularLocation>
        <location evidence="10">Plastid</location>
        <location evidence="10">Chloroplast thylakoid membrane</location>
        <topology evidence="5">Multi-pass membrane protein</topology>
    </subcellularLocation>
</comment>
<comment type="induction">
    <text evidence="7 8">Accumulates at stronger levels in low light than in normal or high light; more expressed in growth chamber conditions than when grown in the field (PubMed:22236032). Repressed in leaves exposed to desiccation, cold and high irradiance via a metalloprotease-dependent proteolytic process (at protein level) (PubMed:23598180).</text>
</comment>
<comment type="PTM">
    <text evidence="6 9 10 12">Photoregulated by reversible but rapid phosphorylation by STN7 of its threonine residues under state 2 (red) light conditions (PubMed:23888908, PubMed:23995216, PubMed:26392145). Dephosphorylated by PPH1 in state 1 (far red) light conditions (PubMed:20176943, PubMed:23888908, PubMed:23995216, PubMed:26392145). Phosphorylation triggers the formation of the PSI-LHCII supercomplex (PubMed:26392145).</text>
</comment>
<comment type="disruption phenotype">
    <text evidence="11">In plants silenced with microRNAs, functional LHCII thylakoid protein complexes where LHCB2 is replaced by LHCB1. However these LHCII complexes are impaired in light state transitions, leading to stunted growth in high light.</text>
</comment>
<comment type="similarity">
    <text evidence="14">Belongs to the light-harvesting chlorophyll a/b-binding (LHC) protein family.</text>
</comment>
<keyword id="KW-0002">3D-structure</keyword>
<keyword id="KW-0148">Chlorophyll</keyword>
<keyword id="KW-0150">Chloroplast</keyword>
<keyword id="KW-0157">Chromophore</keyword>
<keyword id="KW-0460">Magnesium</keyword>
<keyword id="KW-0472">Membrane</keyword>
<keyword id="KW-0479">Metal-binding</keyword>
<keyword id="KW-0597">Phosphoprotein</keyword>
<keyword id="KW-0602">Photosynthesis</keyword>
<keyword id="KW-0603">Photosystem I</keyword>
<keyword id="KW-0604">Photosystem II</keyword>
<keyword id="KW-0934">Plastid</keyword>
<keyword id="KW-1185">Reference proteome</keyword>
<keyword id="KW-0793">Thylakoid</keyword>
<keyword id="KW-0809">Transit peptide</keyword>
<keyword id="KW-0812">Transmembrane</keyword>
<keyword id="KW-1133">Transmembrane helix</keyword>
<name>CB21_ARATH</name>
<evidence type="ECO:0000250" key="1">
    <source>
        <dbReference type="UniProtKB" id="P07371"/>
    </source>
</evidence>
<evidence type="ECO:0000250" key="2">
    <source>
        <dbReference type="UniProtKB" id="P12333"/>
    </source>
</evidence>
<evidence type="ECO:0000250" key="3">
    <source>
        <dbReference type="UniProtKB" id="P27521"/>
    </source>
</evidence>
<evidence type="ECO:0000250" key="4">
    <source>
        <dbReference type="UniProtKB" id="Q9S7J7"/>
    </source>
</evidence>
<evidence type="ECO:0000255" key="5"/>
<evidence type="ECO:0000269" key="6">
    <source>
    </source>
</evidence>
<evidence type="ECO:0000269" key="7">
    <source>
    </source>
</evidence>
<evidence type="ECO:0000269" key="8">
    <source>
    </source>
</evidence>
<evidence type="ECO:0000269" key="9">
    <source>
    </source>
</evidence>
<evidence type="ECO:0000269" key="10">
    <source>
    </source>
</evidence>
<evidence type="ECO:0000269" key="11">
    <source>
    </source>
</evidence>
<evidence type="ECO:0000269" key="12">
    <source>
    </source>
</evidence>
<evidence type="ECO:0000303" key="13">
    <source>
    </source>
</evidence>
<evidence type="ECO:0000305" key="14"/>
<evidence type="ECO:0000312" key="15">
    <source>
        <dbReference type="Araport" id="AT2G05100"/>
    </source>
</evidence>
<evidence type="ECO:0000312" key="16">
    <source>
        <dbReference type="EMBL" id="AAD31358.1"/>
    </source>
</evidence>
<evidence type="ECO:0007829" key="17">
    <source>
        <dbReference type="PDB" id="8J6Z"/>
    </source>
</evidence>
<gene>
    <name evidence="13" type="primary">LHCB2.1</name>
    <name evidence="13" type="synonym">LHCB2.3</name>
    <name evidence="15" type="ordered locus">At2g05100</name>
    <name evidence="16" type="ORF">F15L11.2</name>
</gene>
<proteinExistence type="evidence at protein level"/>
<feature type="transit peptide" description="Chloroplast" evidence="2">
    <location>
        <begin position="1"/>
        <end position="37"/>
    </location>
</feature>
<feature type="chain" id="PRO_0000438437" description="Chlorophyll a-b binding protein 2.1, chloroplastic">
    <location>
        <begin position="38"/>
        <end position="265"/>
    </location>
</feature>
<feature type="transmembrane region" description="Helical" evidence="5">
    <location>
        <begin position="151"/>
        <end position="171"/>
    </location>
</feature>
<feature type="transmembrane region" description="Helical" evidence="5">
    <location>
        <begin position="219"/>
        <end position="239"/>
    </location>
</feature>
<feature type="binding site" description="axial binding residue" evidence="2">
    <location>
        <position position="57"/>
    </location>
    <ligand>
        <name>chlorophyll b</name>
        <dbReference type="ChEBI" id="CHEBI:61721"/>
        <label>1</label>
    </ligand>
    <ligandPart>
        <name>Mg</name>
        <dbReference type="ChEBI" id="CHEBI:25107"/>
    </ligandPart>
</feature>
<feature type="binding site" evidence="1">
    <location>
        <position position="79"/>
    </location>
    <ligand>
        <name>chlorophyll a</name>
        <dbReference type="ChEBI" id="CHEBI:58416"/>
        <label>1</label>
    </ligand>
</feature>
<feature type="binding site" evidence="1">
    <location>
        <position position="85"/>
    </location>
    <ligand>
        <name>chlorophyll a</name>
        <dbReference type="ChEBI" id="CHEBI:58416"/>
        <label>1</label>
    </ligand>
</feature>
<feature type="binding site" description="axial binding residue" evidence="2">
    <location>
        <position position="98"/>
    </location>
    <ligand>
        <name>chlorophyll a</name>
        <dbReference type="ChEBI" id="CHEBI:58416"/>
        <label>1</label>
    </ligand>
    <ligandPart>
        <name>Mg</name>
        <dbReference type="ChEBI" id="CHEBI:25107"/>
    </ligandPart>
</feature>
<feature type="binding site" description="axial binding residue" evidence="2">
    <location>
        <position position="101"/>
    </location>
    <ligand>
        <name>chlorophyll a</name>
        <dbReference type="ChEBI" id="CHEBI:58416"/>
        <label>2</label>
    </ligand>
    <ligandPart>
        <name>Mg</name>
        <dbReference type="ChEBI" id="CHEBI:25107"/>
    </ligandPart>
</feature>
<feature type="binding site" evidence="1">
    <location>
        <position position="103"/>
    </location>
    <ligand>
        <name>chlorophyll b</name>
        <dbReference type="ChEBI" id="CHEBI:61721"/>
        <label>2</label>
    </ligand>
</feature>
<feature type="binding site" evidence="1">
    <location>
        <position position="136"/>
    </location>
    <ligand>
        <name>chlorophyll a</name>
        <dbReference type="ChEBI" id="CHEBI:58416"/>
        <label>3</label>
    </ligand>
</feature>
<feature type="binding site" evidence="1">
    <location>
        <position position="146"/>
    </location>
    <ligand>
        <name>chlorophyll a</name>
        <dbReference type="ChEBI" id="CHEBI:58416"/>
        <label>3</label>
    </ligand>
</feature>
<feature type="binding site" description="axial binding residue" evidence="2">
    <location>
        <position position="152"/>
    </location>
    <ligand>
        <name>chlorophyll b</name>
        <dbReference type="ChEBI" id="CHEBI:61721"/>
        <label>2</label>
    </ligand>
    <ligandPart>
        <name>Mg</name>
        <dbReference type="ChEBI" id="CHEBI:25107"/>
    </ligandPart>
</feature>
<feature type="binding site" evidence="1">
    <location>
        <position position="156"/>
    </location>
    <ligand>
        <name>chlorophyll b</name>
        <dbReference type="ChEBI" id="CHEBI:61721"/>
        <label>3</label>
    </ligand>
</feature>
<feature type="binding site" evidence="1">
    <location>
        <position position="164"/>
    </location>
    <ligand>
        <name>chlorophyll b</name>
        <dbReference type="ChEBI" id="CHEBI:61721"/>
        <label>4</label>
    </ligand>
</feature>
<feature type="binding site" evidence="1">
    <location>
        <position position="164"/>
    </location>
    <ligand>
        <name>chlorophyll b</name>
        <dbReference type="ChEBI" id="CHEBI:61721"/>
        <label>5</label>
    </ligand>
</feature>
<feature type="binding site" description="axial binding residue" evidence="2">
    <location>
        <position position="172"/>
    </location>
    <ligand>
        <name>chlorophyll b</name>
        <dbReference type="ChEBI" id="CHEBI:61721"/>
        <label>3</label>
    </ligand>
    <ligandPart>
        <name>Mg</name>
        <dbReference type="ChEBI" id="CHEBI:25107"/>
    </ligandPart>
</feature>
<feature type="binding site" evidence="1">
    <location>
        <position position="175"/>
    </location>
    <ligand>
        <name>chlorophyll b</name>
        <dbReference type="ChEBI" id="CHEBI:61721"/>
        <label>4</label>
    </ligand>
</feature>
<feature type="binding site" evidence="1">
    <location>
        <position position="181"/>
    </location>
    <ligand>
        <name>chlorophyll b</name>
        <dbReference type="ChEBI" id="CHEBI:61721"/>
        <label>2</label>
    </ligand>
</feature>
<feature type="binding site" evidence="1">
    <location>
        <position position="212"/>
    </location>
    <ligand>
        <name>chlorophyll a</name>
        <dbReference type="ChEBI" id="CHEBI:58416"/>
        <label>5</label>
    </ligand>
</feature>
<feature type="binding site" description="axial binding residue" evidence="2">
    <location>
        <position position="213"/>
    </location>
    <ligand>
        <name>chlorophyll a</name>
        <dbReference type="ChEBI" id="CHEBI:58416"/>
        <label>3</label>
    </ligand>
    <ligandPart>
        <name>Mg</name>
        <dbReference type="ChEBI" id="CHEBI:25107"/>
    </ligandPart>
</feature>
<feature type="binding site" description="axial binding residue" evidence="2">
    <location>
        <position position="216"/>
    </location>
    <ligand>
        <name>chlorophyll a</name>
        <dbReference type="ChEBI" id="CHEBI:58416"/>
        <label>4</label>
    </ligand>
    <ligandPart>
        <name>Mg</name>
        <dbReference type="ChEBI" id="CHEBI:25107"/>
    </ligandPart>
</feature>
<feature type="binding site" evidence="1">
    <location>
        <position position="218"/>
    </location>
    <ligand>
        <name>chlorophyll a</name>
        <dbReference type="ChEBI" id="CHEBI:58416"/>
        <label>1</label>
    </ligand>
</feature>
<feature type="binding site" description="axial binding residue" evidence="2">
    <location>
        <position position="230"/>
    </location>
    <ligand>
        <name>chlorophyll a</name>
        <dbReference type="ChEBI" id="CHEBI:58416"/>
        <label>5</label>
    </ligand>
    <ligandPart>
        <name>Mg</name>
        <dbReference type="ChEBI" id="CHEBI:25107"/>
    </ligandPart>
</feature>
<feature type="binding site" description="axial binding residue" evidence="2">
    <location>
        <position position="245"/>
    </location>
    <ligand>
        <name>chlorophyll a</name>
        <dbReference type="ChEBI" id="CHEBI:58416"/>
        <label>6</label>
    </ligand>
    <ligandPart>
        <name>Mg</name>
        <dbReference type="ChEBI" id="CHEBI:25107"/>
    </ligandPart>
</feature>
<feature type="binding site" evidence="1">
    <location>
        <position position="254"/>
    </location>
    <ligand>
        <name>chlorophyll a</name>
        <dbReference type="ChEBI" id="CHEBI:58416"/>
        <label>6</label>
    </ligand>
</feature>
<feature type="binding site" evidence="1">
    <location>
        <position position="261"/>
    </location>
    <ligand>
        <name>chlorophyll b</name>
        <dbReference type="ChEBI" id="CHEBI:61721"/>
        <label>5</label>
    </ligand>
</feature>
<feature type="modified residue" description="Phosphothreonine; by STN7" evidence="9">
    <location>
        <position position="40"/>
    </location>
</feature>
<feature type="sequence conflict" description="In Ref. 1; AAD28769." evidence="14" ref="1">
    <original>A</original>
    <variation>G</variation>
    <location>
        <position position="2"/>
    </location>
</feature>
<feature type="sequence conflict" description="In Ref. 1; AAD28769/AAD28771." evidence="14" ref="1">
    <original>N</original>
    <variation>K</variation>
    <location>
        <position position="265"/>
    </location>
</feature>
<feature type="helix" evidence="17">
    <location>
        <begin position="59"/>
        <end position="61"/>
    </location>
</feature>
<feature type="helix" evidence="17">
    <location>
        <begin position="88"/>
        <end position="120"/>
    </location>
</feature>
<feature type="helix" evidence="17">
    <location>
        <begin position="130"/>
        <end position="138"/>
    </location>
</feature>
<feature type="strand" evidence="17">
    <location>
        <begin position="139"/>
        <end position="141"/>
    </location>
</feature>
<feature type="helix" evidence="17">
    <location>
        <begin position="157"/>
        <end position="170"/>
    </location>
</feature>
<feature type="turn" evidence="17">
    <location>
        <begin position="171"/>
        <end position="173"/>
    </location>
</feature>
<feature type="helix" evidence="17">
    <location>
        <begin position="174"/>
        <end position="177"/>
    </location>
</feature>
<feature type="strand" evidence="17">
    <location>
        <begin position="182"/>
        <end position="184"/>
    </location>
</feature>
<feature type="helix" evidence="17">
    <location>
        <begin position="192"/>
        <end position="194"/>
    </location>
</feature>
<feature type="helix" evidence="17">
    <location>
        <begin position="203"/>
        <end position="232"/>
    </location>
</feature>
<feature type="helix" evidence="17">
    <location>
        <begin position="238"/>
        <end position="247"/>
    </location>
</feature>
<feature type="turn" evidence="17">
    <location>
        <begin position="249"/>
        <end position="251"/>
    </location>
</feature>
<feature type="helix" evidence="17">
    <location>
        <begin position="254"/>
        <end position="257"/>
    </location>
</feature>